<proteinExistence type="inferred from homology"/>
<dbReference type="EMBL" id="AAFW02000145">
    <property type="protein sequence ID" value="EDN60812.1"/>
    <property type="molecule type" value="Genomic_DNA"/>
</dbReference>
<dbReference type="SMR" id="A6ZZ82"/>
<dbReference type="HOGENOM" id="CLU_147114_2_2_1"/>
<dbReference type="Proteomes" id="UP000007060">
    <property type="component" value="Unassembled WGS sequence"/>
</dbReference>
<dbReference type="GO" id="GO:0005759">
    <property type="term" value="C:mitochondrial matrix"/>
    <property type="evidence" value="ECO:0007669"/>
    <property type="project" value="UniProtKB-SubCell"/>
</dbReference>
<dbReference type="GO" id="GO:0044183">
    <property type="term" value="F:protein folding chaperone"/>
    <property type="evidence" value="ECO:0007669"/>
    <property type="project" value="TreeGrafter"/>
</dbReference>
<dbReference type="GO" id="GO:0034551">
    <property type="term" value="P:mitochondrial respiratory chain complex III assembly"/>
    <property type="evidence" value="ECO:0007669"/>
    <property type="project" value="InterPro"/>
</dbReference>
<dbReference type="CDD" id="cd20267">
    <property type="entry name" value="Complex1_LYR_LYRM7"/>
    <property type="match status" value="1"/>
</dbReference>
<dbReference type="InterPro" id="IPR045298">
    <property type="entry name" value="Complex1_LYR_LYRM7"/>
</dbReference>
<dbReference type="InterPro" id="IPR050435">
    <property type="entry name" value="MZM1/LYRM7"/>
</dbReference>
<dbReference type="PANTHER" id="PTHR46749">
    <property type="entry name" value="COMPLEX III ASSEMBLY FACTOR LYRM7"/>
    <property type="match status" value="1"/>
</dbReference>
<dbReference type="PANTHER" id="PTHR46749:SF1">
    <property type="entry name" value="COMPLEX III ASSEMBLY FACTOR LYRM7"/>
    <property type="match status" value="1"/>
</dbReference>
<keyword id="KW-0143">Chaperone</keyword>
<keyword id="KW-0496">Mitochondrion</keyword>
<keyword id="KW-0809">Transit peptide</keyword>
<protein>
    <recommendedName>
        <fullName>Mitochondrial zinc maintenance protein 1, mitochondrial</fullName>
    </recommendedName>
    <alternativeName>
        <fullName>Altered inheritance of mitochondria protein 8</fullName>
    </alternativeName>
    <alternativeName>
        <fullName>Found in mitochondrial proteome protein 36</fullName>
    </alternativeName>
</protein>
<name>MZM1_YEAS7</name>
<gene>
    <name type="primary">MZM1</name>
    <name type="synonym">AIM8</name>
    <name type="synonym">FMP36</name>
    <name type="ORF">SCY_1371</name>
</gene>
<evidence type="ECO:0000250" key="1"/>
<evidence type="ECO:0000255" key="2"/>
<evidence type="ECO:0000305" key="3"/>
<feature type="transit peptide" description="Mitochondrion" evidence="2">
    <location>
        <begin position="1"/>
        <end position="24"/>
    </location>
</feature>
<feature type="chain" id="PRO_0000405514" description="Mitochondrial zinc maintenance protein 1, mitochondrial">
    <location>
        <begin position="25"/>
        <end position="123"/>
    </location>
</feature>
<organism>
    <name type="scientific">Saccharomyces cerevisiae (strain YJM789)</name>
    <name type="common">Baker's yeast</name>
    <dbReference type="NCBI Taxonomy" id="307796"/>
    <lineage>
        <taxon>Eukaryota</taxon>
        <taxon>Fungi</taxon>
        <taxon>Dikarya</taxon>
        <taxon>Ascomycota</taxon>
        <taxon>Saccharomycotina</taxon>
        <taxon>Saccharomycetes</taxon>
        <taxon>Saccharomycetales</taxon>
        <taxon>Saccharomycetaceae</taxon>
        <taxon>Saccharomyces</taxon>
    </lineage>
</organism>
<reference key="1">
    <citation type="journal article" date="2007" name="Proc. Natl. Acad. Sci. U.S.A.">
        <title>Genome sequencing and comparative analysis of Saccharomyces cerevisiae strain YJM789.</title>
        <authorList>
            <person name="Wei W."/>
            <person name="McCusker J.H."/>
            <person name="Hyman R.W."/>
            <person name="Jones T."/>
            <person name="Ning Y."/>
            <person name="Cao Z."/>
            <person name="Gu Z."/>
            <person name="Bruno D."/>
            <person name="Miranda M."/>
            <person name="Nguyen M."/>
            <person name="Wilhelmy J."/>
            <person name="Komp C."/>
            <person name="Tamse R."/>
            <person name="Wang X."/>
            <person name="Jia P."/>
            <person name="Luedi P."/>
            <person name="Oefner P.J."/>
            <person name="David L."/>
            <person name="Dietrich F.S."/>
            <person name="Li Y."/>
            <person name="Davis R.W."/>
            <person name="Steinmetz L.M."/>
        </authorList>
    </citation>
    <scope>NUCLEOTIDE SEQUENCE [LARGE SCALE GENOMIC DNA]</scope>
    <source>
        <strain>YJM789</strain>
    </source>
</reference>
<comment type="function">
    <text evidence="1">Assembly factor required for Rieske Fe-S protein RIP1 incorporation into the cytochrome b-c1 (CIII) complex. Functions as a chaperone, binding to this subunit within the mitochondrial matrix and stabilizing it prior to its translocation and insertion into the late CIII dimeric intermediate within the mitochondrial inner membrane. Modulates the mitochondrial matrix zinc pool (By similarity).</text>
</comment>
<comment type="subunit">
    <text evidence="1">Interacts with RIP1.</text>
</comment>
<comment type="subcellular location">
    <subcellularLocation>
        <location evidence="1">Mitochondrion matrix</location>
    </subcellularLocation>
</comment>
<comment type="similarity">
    <text evidence="3">Belongs to the complex I LYR family. MZM1 subfamily.</text>
</comment>
<sequence length="123" mass="13927">MSTRTKALNAYRHGLRATRIAFRNDAEVLLAARAKMRSGMLCPPDPKLTTEDQIQHLEDVAVFLRRNLVQGKKVDGSSTKEPRYHLNIHKDTELGDNETIADPTARVKTNLKARPFKCSDKKQ</sequence>
<accession>A6ZZ82</accession>